<evidence type="ECO:0000255" key="1">
    <source>
        <dbReference type="HAMAP-Rule" id="MF_00131"/>
    </source>
</evidence>
<protein>
    <recommendedName>
        <fullName evidence="1">Tryptophan synthase alpha chain</fullName>
        <ecNumber evidence="1">4.2.1.20</ecNumber>
    </recommendedName>
</protein>
<gene>
    <name evidence="1" type="primary">trpA</name>
    <name type="ordered locus">EcE24377A_1459</name>
</gene>
<proteinExistence type="inferred from homology"/>
<reference key="1">
    <citation type="journal article" date="2008" name="J. Bacteriol.">
        <title>The pangenome structure of Escherichia coli: comparative genomic analysis of E. coli commensal and pathogenic isolates.</title>
        <authorList>
            <person name="Rasko D.A."/>
            <person name="Rosovitz M.J."/>
            <person name="Myers G.S.A."/>
            <person name="Mongodin E.F."/>
            <person name="Fricke W.F."/>
            <person name="Gajer P."/>
            <person name="Crabtree J."/>
            <person name="Sebaihia M."/>
            <person name="Thomson N.R."/>
            <person name="Chaudhuri R."/>
            <person name="Henderson I.R."/>
            <person name="Sperandio V."/>
            <person name="Ravel J."/>
        </authorList>
    </citation>
    <scope>NUCLEOTIDE SEQUENCE [LARGE SCALE GENOMIC DNA]</scope>
    <source>
        <strain>E24377A / ETEC</strain>
    </source>
</reference>
<feature type="chain" id="PRO_1000057851" description="Tryptophan synthase alpha chain">
    <location>
        <begin position="1"/>
        <end position="268"/>
    </location>
</feature>
<feature type="active site" description="Proton acceptor" evidence="1">
    <location>
        <position position="49"/>
    </location>
</feature>
<feature type="active site" description="Proton acceptor" evidence="1">
    <location>
        <position position="60"/>
    </location>
</feature>
<sequence length="268" mass="28764">MERYESLFAQLKERKEGAFVPFVTLGDPGIEQSLKIIDTLIEAGADALELGIPFSDPLADGPTIQNATLRAFAAGVTPAQCFEMLALIRQKHPTIPIGLLMYANLVFNKGIDEFYAQCEKVGVDSVLVADVPIEESAPFRQAALRHNVAPIFICPPNADDDLLRQIASYGRGYTYLLSRAGVTGAENRAALPLNHLVAKLKEYNAAPPLQGFGISAPDQVKAPIDAGAAGAISGSAIVKIIEQHINEPEKMLAALKVFVQPMKAATRS</sequence>
<name>TRPA_ECO24</name>
<organism>
    <name type="scientific">Escherichia coli O139:H28 (strain E24377A / ETEC)</name>
    <dbReference type="NCBI Taxonomy" id="331111"/>
    <lineage>
        <taxon>Bacteria</taxon>
        <taxon>Pseudomonadati</taxon>
        <taxon>Pseudomonadota</taxon>
        <taxon>Gammaproteobacteria</taxon>
        <taxon>Enterobacterales</taxon>
        <taxon>Enterobacteriaceae</taxon>
        <taxon>Escherichia</taxon>
    </lineage>
</organism>
<comment type="function">
    <text evidence="1">The alpha subunit is responsible for the aldol cleavage of indoleglycerol phosphate to indole and glyceraldehyde 3-phosphate.</text>
</comment>
<comment type="catalytic activity">
    <reaction evidence="1">
        <text>(1S,2R)-1-C-(indol-3-yl)glycerol 3-phosphate + L-serine = D-glyceraldehyde 3-phosphate + L-tryptophan + H2O</text>
        <dbReference type="Rhea" id="RHEA:10532"/>
        <dbReference type="ChEBI" id="CHEBI:15377"/>
        <dbReference type="ChEBI" id="CHEBI:33384"/>
        <dbReference type="ChEBI" id="CHEBI:57912"/>
        <dbReference type="ChEBI" id="CHEBI:58866"/>
        <dbReference type="ChEBI" id="CHEBI:59776"/>
        <dbReference type="EC" id="4.2.1.20"/>
    </reaction>
</comment>
<comment type="pathway">
    <text evidence="1">Amino-acid biosynthesis; L-tryptophan biosynthesis; L-tryptophan from chorismate: step 5/5.</text>
</comment>
<comment type="subunit">
    <text evidence="1">Tetramer of two alpha and two beta chains.</text>
</comment>
<comment type="similarity">
    <text evidence="1">Belongs to the TrpA family.</text>
</comment>
<accession>A7ZL78</accession>
<dbReference type="EC" id="4.2.1.20" evidence="1"/>
<dbReference type="EMBL" id="CP000800">
    <property type="protein sequence ID" value="ABV16823.1"/>
    <property type="molecule type" value="Genomic_DNA"/>
</dbReference>
<dbReference type="RefSeq" id="WP_000443057.1">
    <property type="nucleotide sequence ID" value="NC_009801.1"/>
</dbReference>
<dbReference type="SMR" id="A7ZL78"/>
<dbReference type="KEGG" id="ecw:EcE24377A_1459"/>
<dbReference type="HOGENOM" id="CLU_016734_0_4_6"/>
<dbReference type="UniPathway" id="UPA00035">
    <property type="reaction ID" value="UER00044"/>
</dbReference>
<dbReference type="Proteomes" id="UP000001122">
    <property type="component" value="Chromosome"/>
</dbReference>
<dbReference type="GO" id="GO:0005829">
    <property type="term" value="C:cytosol"/>
    <property type="evidence" value="ECO:0007669"/>
    <property type="project" value="TreeGrafter"/>
</dbReference>
<dbReference type="GO" id="GO:0004834">
    <property type="term" value="F:tryptophan synthase activity"/>
    <property type="evidence" value="ECO:0007669"/>
    <property type="project" value="UniProtKB-UniRule"/>
</dbReference>
<dbReference type="CDD" id="cd04724">
    <property type="entry name" value="Tryptophan_synthase_alpha"/>
    <property type="match status" value="1"/>
</dbReference>
<dbReference type="FunFam" id="3.20.20.70:FF:000037">
    <property type="entry name" value="Tryptophan synthase alpha chain"/>
    <property type="match status" value="1"/>
</dbReference>
<dbReference type="Gene3D" id="3.20.20.70">
    <property type="entry name" value="Aldolase class I"/>
    <property type="match status" value="1"/>
</dbReference>
<dbReference type="HAMAP" id="MF_00131">
    <property type="entry name" value="Trp_synth_alpha"/>
    <property type="match status" value="1"/>
</dbReference>
<dbReference type="InterPro" id="IPR013785">
    <property type="entry name" value="Aldolase_TIM"/>
</dbReference>
<dbReference type="InterPro" id="IPR011060">
    <property type="entry name" value="RibuloseP-bd_barrel"/>
</dbReference>
<dbReference type="InterPro" id="IPR018204">
    <property type="entry name" value="Trp_synthase_alpha_AS"/>
</dbReference>
<dbReference type="InterPro" id="IPR002028">
    <property type="entry name" value="Trp_synthase_suA"/>
</dbReference>
<dbReference type="NCBIfam" id="TIGR00262">
    <property type="entry name" value="trpA"/>
    <property type="match status" value="1"/>
</dbReference>
<dbReference type="PANTHER" id="PTHR43406:SF1">
    <property type="entry name" value="TRYPTOPHAN SYNTHASE ALPHA CHAIN, CHLOROPLASTIC"/>
    <property type="match status" value="1"/>
</dbReference>
<dbReference type="PANTHER" id="PTHR43406">
    <property type="entry name" value="TRYPTOPHAN SYNTHASE, ALPHA CHAIN"/>
    <property type="match status" value="1"/>
</dbReference>
<dbReference type="Pfam" id="PF00290">
    <property type="entry name" value="Trp_syntA"/>
    <property type="match status" value="1"/>
</dbReference>
<dbReference type="SUPFAM" id="SSF51366">
    <property type="entry name" value="Ribulose-phoshate binding barrel"/>
    <property type="match status" value="1"/>
</dbReference>
<dbReference type="PROSITE" id="PS00167">
    <property type="entry name" value="TRP_SYNTHASE_ALPHA"/>
    <property type="match status" value="1"/>
</dbReference>
<keyword id="KW-0028">Amino-acid biosynthesis</keyword>
<keyword id="KW-0057">Aromatic amino acid biosynthesis</keyword>
<keyword id="KW-0456">Lyase</keyword>
<keyword id="KW-1185">Reference proteome</keyword>
<keyword id="KW-0822">Tryptophan biosynthesis</keyword>